<sequence length="6" mass="730">EDLPEK</sequence>
<proteinExistence type="evidence at protein level"/>
<comment type="subcellular location">
    <subcellularLocation>
        <location evidence="1">Secreted</location>
        <location evidence="1">Cell wall</location>
    </subcellularLocation>
</comment>
<reference evidence="3" key="1">
    <citation type="journal article" date="1997" name="J. Biol. Chem.">
        <title>Differential extraction and protein sequencing reveals major differences in patterns of primary cell wall proteins from plants.</title>
        <authorList>
            <person name="Robertson D."/>
            <person name="Mitchell G.P."/>
            <person name="Gilroy J.S."/>
            <person name="Gerrish C."/>
            <person name="Bolwell G.P."/>
            <person name="Slabas A.R."/>
        </authorList>
    </citation>
    <scope>PROTEIN SEQUENCE</scope>
    <scope>SUBCELLULAR LOCATION</scope>
    <source>
        <strain>cv. Landsberg erecta</strain>
    </source>
</reference>
<organism>
    <name type="scientific">Arabidopsis thaliana</name>
    <name type="common">Mouse-ear cress</name>
    <dbReference type="NCBI Taxonomy" id="3702"/>
    <lineage>
        <taxon>Eukaryota</taxon>
        <taxon>Viridiplantae</taxon>
        <taxon>Streptophyta</taxon>
        <taxon>Embryophyta</taxon>
        <taxon>Tracheophyta</taxon>
        <taxon>Spermatophyta</taxon>
        <taxon>Magnoliopsida</taxon>
        <taxon>eudicotyledons</taxon>
        <taxon>Gunneridae</taxon>
        <taxon>Pentapetalae</taxon>
        <taxon>rosids</taxon>
        <taxon>malvids</taxon>
        <taxon>Brassicales</taxon>
        <taxon>Brassicaceae</taxon>
        <taxon>Camelineae</taxon>
        <taxon>Arabidopsis</taxon>
    </lineage>
</organism>
<protein>
    <recommendedName>
        <fullName>36 kDa cell wall protein</fullName>
    </recommendedName>
</protein>
<keyword id="KW-0134">Cell wall</keyword>
<keyword id="KW-0903">Direct protein sequencing</keyword>
<keyword id="KW-0964">Secreted</keyword>
<feature type="chain" id="PRO_0000079714" description="36 kDa cell wall protein">
    <location>
        <begin position="1"/>
        <end position="6" status="greater than"/>
    </location>
</feature>
<feature type="non-terminal residue" evidence="2">
    <location>
        <position position="6"/>
    </location>
</feature>
<name>CWP29_ARATH</name>
<evidence type="ECO:0000269" key="1">
    <source>
    </source>
</evidence>
<evidence type="ECO:0000303" key="2">
    <source>
    </source>
</evidence>
<evidence type="ECO:0000305" key="3"/>
<accession>P80849</accession>
<dbReference type="GO" id="GO:0005576">
    <property type="term" value="C:extracellular region"/>
    <property type="evidence" value="ECO:0007669"/>
    <property type="project" value="UniProtKB-KW"/>
</dbReference>